<protein>
    <recommendedName>
        <fullName>L-aminoadipate-semialdehyde dehydrogenase-phosphopantetheinyl transferase</fullName>
        <ecNumber evidence="1">2.7.8.7</ecNumber>
    </recommendedName>
    <alternativeName>
        <fullName>4'-phosphopantetheinyl transferase</fullName>
    </alternativeName>
    <alternativeName>
        <fullName>Alpha-aminoadipic semialdehyde dehydrogenase-phosphopantetheinyl transferase</fullName>
        <shortName>AASD-PPT</shortName>
    </alternativeName>
</protein>
<sequence>MVFPAKRLCVVPYMEGVRWAFSCGTWLPSPAEWLLAVRSIQPEEKERIGQFVFARDAKAALAGRLMIRKLVAEKLNIPWDHIRLQRTSKGKPILAKDTLNPYPNFNFNISHQGDYTVLAAEPELQVGIDIMKTSFPGRGSIPEFFHIMKRKFTNKEWETIRSFNDEWSQLDMFYRHWALKESFIKAIGVGLGFEMQRLEFDVSPLSMDIGQVYKETRLILDGEEEKEWAFEESKIDQHHFVAVALRKPDGSRHQNVSYQDDSKPSQRQFTILNFNDLIASAIPMTPEDPSFWDCFCFTEEILIRNGSKS</sequence>
<name>ADPPT_RAT</name>
<gene>
    <name type="primary">Aasdhppt</name>
</gene>
<evidence type="ECO:0000250" key="1">
    <source>
        <dbReference type="UniProtKB" id="Q9NRN7"/>
    </source>
</evidence>
<evidence type="ECO:0000305" key="2"/>
<reference key="1">
    <citation type="submission" date="2005-07" db="EMBL/GenBank/DDBJ databases">
        <authorList>
            <person name="Mural R.J."/>
            <person name="Adams M.D."/>
            <person name="Myers E.W."/>
            <person name="Smith H.O."/>
            <person name="Venter J.C."/>
        </authorList>
    </citation>
    <scope>NUCLEOTIDE SEQUENCE [LARGE SCALE GENOMIC DNA]</scope>
</reference>
<reference key="2">
    <citation type="journal article" date="2004" name="Genome Res.">
        <title>The status, quality, and expansion of the NIH full-length cDNA project: the Mammalian Gene Collection (MGC).</title>
        <authorList>
            <consortium name="The MGC Project Team"/>
        </authorList>
    </citation>
    <scope>NUCLEOTIDE SEQUENCE [LARGE SCALE MRNA]</scope>
    <source>
        <tissue>Prostate</tissue>
    </source>
</reference>
<keyword id="KW-0963">Cytoplasm</keyword>
<keyword id="KW-0460">Magnesium</keyword>
<keyword id="KW-0479">Metal-binding</keyword>
<keyword id="KW-1185">Reference proteome</keyword>
<keyword id="KW-0808">Transferase</keyword>
<comment type="function">
    <text evidence="1">Catalyzes the post-translational modification of target proteins by phosphopantetheine. Can transfer the 4'-phosphopantetheine moiety from coenzyme A, regardless of whether the CoA is presented in the free thiol form or as an acetyl thioester, to a serine residue of a broad range of acceptors including the acyl carrier domain of FASN.</text>
</comment>
<comment type="catalytic activity">
    <reaction evidence="1">
        <text>apo-[ACP] + CoA = holo-[ACP] + adenosine 3',5'-bisphosphate + H(+)</text>
        <dbReference type="Rhea" id="RHEA:12068"/>
        <dbReference type="Rhea" id="RHEA-COMP:9685"/>
        <dbReference type="Rhea" id="RHEA-COMP:9690"/>
        <dbReference type="ChEBI" id="CHEBI:15378"/>
        <dbReference type="ChEBI" id="CHEBI:29999"/>
        <dbReference type="ChEBI" id="CHEBI:57287"/>
        <dbReference type="ChEBI" id="CHEBI:58343"/>
        <dbReference type="ChEBI" id="CHEBI:64479"/>
        <dbReference type="EC" id="2.7.8.7"/>
    </reaction>
    <physiologicalReaction direction="left-to-right" evidence="1">
        <dbReference type="Rhea" id="RHEA:12069"/>
    </physiologicalReaction>
</comment>
<comment type="catalytic activity">
    <reaction evidence="1">
        <text>apo-[ACP] + acetyl-CoA = acetyl-[ACP] + adenosine 3',5'-bisphosphate + H(+)</text>
        <dbReference type="Rhea" id="RHEA:46564"/>
        <dbReference type="Rhea" id="RHEA-COMP:9621"/>
        <dbReference type="Rhea" id="RHEA-COMP:9690"/>
        <dbReference type="ChEBI" id="CHEBI:15378"/>
        <dbReference type="ChEBI" id="CHEBI:29999"/>
        <dbReference type="ChEBI" id="CHEBI:57288"/>
        <dbReference type="ChEBI" id="CHEBI:58343"/>
        <dbReference type="ChEBI" id="CHEBI:78446"/>
    </reaction>
    <physiologicalReaction direction="left-to-right" evidence="1">
        <dbReference type="Rhea" id="RHEA:46565"/>
    </physiologicalReaction>
</comment>
<comment type="cofactor">
    <cofactor evidence="1">
        <name>Mg(2+)</name>
        <dbReference type="ChEBI" id="CHEBI:18420"/>
    </cofactor>
    <text evidence="1">Binds 1 Mg(2+) ion.</text>
</comment>
<comment type="subunit">
    <text evidence="1">Monomer.</text>
</comment>
<comment type="subcellular location">
    <subcellularLocation>
        <location evidence="1">Cytoplasm</location>
        <location evidence="1">Cytosol</location>
    </subcellularLocation>
</comment>
<comment type="similarity">
    <text evidence="2">Belongs to the P-Pant transferase superfamily. AcpS family.</text>
</comment>
<dbReference type="EC" id="2.7.8.7" evidence="1"/>
<dbReference type="EMBL" id="CH474089">
    <property type="protein sequence ID" value="EDL85225.1"/>
    <property type="molecule type" value="Genomic_DNA"/>
</dbReference>
<dbReference type="EMBL" id="BC166800">
    <property type="protein sequence ID" value="AAI66800.1"/>
    <property type="molecule type" value="mRNA"/>
</dbReference>
<dbReference type="RefSeq" id="NP_001100268.2">
    <property type="nucleotide sequence ID" value="NM_001106798.2"/>
</dbReference>
<dbReference type="SMR" id="B2RYJ4"/>
<dbReference type="FunCoup" id="B2RYJ4">
    <property type="interactions" value="1676"/>
</dbReference>
<dbReference type="STRING" id="10116.ENSRNOP00000008062"/>
<dbReference type="iPTMnet" id="B2RYJ4"/>
<dbReference type="PhosphoSitePlus" id="B2RYJ4"/>
<dbReference type="jPOST" id="B2RYJ4"/>
<dbReference type="PaxDb" id="10116-ENSRNOP00000008062"/>
<dbReference type="PeptideAtlas" id="B2RYJ4"/>
<dbReference type="GeneID" id="300328"/>
<dbReference type="KEGG" id="rno:300328"/>
<dbReference type="UCSC" id="RGD:1311360">
    <property type="organism name" value="rat"/>
</dbReference>
<dbReference type="AGR" id="RGD:1311360"/>
<dbReference type="CTD" id="60496"/>
<dbReference type="RGD" id="1311360">
    <property type="gene designation" value="Aasdhppt"/>
</dbReference>
<dbReference type="VEuPathDB" id="HostDB:ENSRNOG00000005795"/>
<dbReference type="eggNOG" id="KOG0945">
    <property type="taxonomic scope" value="Eukaryota"/>
</dbReference>
<dbReference type="HOGENOM" id="CLU_057011_3_0_1"/>
<dbReference type="InParanoid" id="B2RYJ4"/>
<dbReference type="OrthoDB" id="26719at2759"/>
<dbReference type="PhylomeDB" id="B2RYJ4"/>
<dbReference type="TreeFam" id="TF313753"/>
<dbReference type="Reactome" id="R-RNO-199220">
    <property type="pathway name" value="Vitamin B5 (pantothenate) metabolism"/>
</dbReference>
<dbReference type="PRO" id="PR:B2RYJ4"/>
<dbReference type="Proteomes" id="UP000002494">
    <property type="component" value="Chromosome 8"/>
</dbReference>
<dbReference type="Proteomes" id="UP000234681">
    <property type="component" value="Chromosome 8"/>
</dbReference>
<dbReference type="Bgee" id="ENSRNOG00000005795">
    <property type="expression patterns" value="Expressed in quadriceps femoris and 19 other cell types or tissues"/>
</dbReference>
<dbReference type="GO" id="GO:0005829">
    <property type="term" value="C:cytosol"/>
    <property type="evidence" value="ECO:0000250"/>
    <property type="project" value="UniProtKB"/>
</dbReference>
<dbReference type="GO" id="GO:0008897">
    <property type="term" value="F:holo-[acyl-carrier-protein] synthase activity"/>
    <property type="evidence" value="ECO:0000250"/>
    <property type="project" value="UniProtKB"/>
</dbReference>
<dbReference type="GO" id="GO:0000287">
    <property type="term" value="F:magnesium ion binding"/>
    <property type="evidence" value="ECO:0000250"/>
    <property type="project" value="UniProtKB"/>
</dbReference>
<dbReference type="GO" id="GO:0009258">
    <property type="term" value="P:10-formyltetrahydrofolate catabolic process"/>
    <property type="evidence" value="ECO:0000266"/>
    <property type="project" value="RGD"/>
</dbReference>
<dbReference type="GO" id="GO:0019878">
    <property type="term" value="P:lysine biosynthetic process via aminoadipic acid"/>
    <property type="evidence" value="ECO:0000318"/>
    <property type="project" value="GO_Central"/>
</dbReference>
<dbReference type="GO" id="GO:0051604">
    <property type="term" value="P:protein maturation"/>
    <property type="evidence" value="ECO:0000250"/>
    <property type="project" value="UniProtKB"/>
</dbReference>
<dbReference type="FunFam" id="3.90.470.20:FF:000006">
    <property type="entry name" value="L-aminoadipate-semialdehyde dehydrogenase-phosphopantetheinyl transferase"/>
    <property type="match status" value="1"/>
</dbReference>
<dbReference type="Gene3D" id="3.90.470.20">
    <property type="entry name" value="4'-phosphopantetheinyl transferase domain"/>
    <property type="match status" value="2"/>
</dbReference>
<dbReference type="InterPro" id="IPR008278">
    <property type="entry name" value="4-PPantetheinyl_Trfase_dom"/>
</dbReference>
<dbReference type="InterPro" id="IPR037143">
    <property type="entry name" value="4-PPantetheinyl_Trfase_dom_sf"/>
</dbReference>
<dbReference type="InterPro" id="IPR055066">
    <property type="entry name" value="AASDHPPT_N"/>
</dbReference>
<dbReference type="InterPro" id="IPR050559">
    <property type="entry name" value="P-Pant_transferase_sf"/>
</dbReference>
<dbReference type="PANTHER" id="PTHR12215:SF10">
    <property type="entry name" value="L-AMINOADIPATE-SEMIALDEHYDE DEHYDROGENASE-PHOSPHOPANTETHEINYL TRANSFERASE"/>
    <property type="match status" value="1"/>
</dbReference>
<dbReference type="PANTHER" id="PTHR12215">
    <property type="entry name" value="PHOSPHOPANTETHEINE TRANSFERASE"/>
    <property type="match status" value="1"/>
</dbReference>
<dbReference type="Pfam" id="PF22624">
    <property type="entry name" value="AASDHPPT_N"/>
    <property type="match status" value="1"/>
</dbReference>
<dbReference type="Pfam" id="PF01648">
    <property type="entry name" value="ACPS"/>
    <property type="match status" value="1"/>
</dbReference>
<dbReference type="SUPFAM" id="SSF56214">
    <property type="entry name" value="4'-phosphopantetheinyl transferase"/>
    <property type="match status" value="2"/>
</dbReference>
<accession>B2RYJ4</accession>
<proteinExistence type="evidence at transcript level"/>
<organism>
    <name type="scientific">Rattus norvegicus</name>
    <name type="common">Rat</name>
    <dbReference type="NCBI Taxonomy" id="10116"/>
    <lineage>
        <taxon>Eukaryota</taxon>
        <taxon>Metazoa</taxon>
        <taxon>Chordata</taxon>
        <taxon>Craniata</taxon>
        <taxon>Vertebrata</taxon>
        <taxon>Euteleostomi</taxon>
        <taxon>Mammalia</taxon>
        <taxon>Eutheria</taxon>
        <taxon>Euarchontoglires</taxon>
        <taxon>Glires</taxon>
        <taxon>Rodentia</taxon>
        <taxon>Myomorpha</taxon>
        <taxon>Muroidea</taxon>
        <taxon>Muridae</taxon>
        <taxon>Murinae</taxon>
        <taxon>Rattus</taxon>
    </lineage>
</organism>
<feature type="chain" id="PRO_0000379130" description="L-aminoadipate-semialdehyde dehydrogenase-phosphopantetheinyl transferase">
    <location>
        <begin position="1"/>
        <end position="309"/>
    </location>
</feature>
<feature type="binding site" evidence="1">
    <location>
        <position position="47"/>
    </location>
    <ligand>
        <name>CoA</name>
        <dbReference type="ChEBI" id="CHEBI:57287"/>
    </ligand>
</feature>
<feature type="binding site" evidence="1">
    <location>
        <begin position="86"/>
        <end position="91"/>
    </location>
    <ligand>
        <name>CoA</name>
        <dbReference type="ChEBI" id="CHEBI:57287"/>
    </ligand>
</feature>
<feature type="binding site" evidence="1">
    <location>
        <begin position="108"/>
        <end position="111"/>
    </location>
    <ligand>
        <name>CoA</name>
        <dbReference type="ChEBI" id="CHEBI:57287"/>
    </ligand>
</feature>
<feature type="binding site" evidence="1">
    <location>
        <position position="129"/>
    </location>
    <ligand>
        <name>Mg(2+)</name>
        <dbReference type="ChEBI" id="CHEBI:18420"/>
    </ligand>
</feature>
<feature type="binding site" evidence="1">
    <location>
        <begin position="181"/>
        <end position="185"/>
    </location>
    <ligand>
        <name>CoA</name>
        <dbReference type="ChEBI" id="CHEBI:57287"/>
    </ligand>
</feature>
<feature type="binding site" evidence="1">
    <location>
        <position position="181"/>
    </location>
    <ligand>
        <name>Mg(2+)</name>
        <dbReference type="ChEBI" id="CHEBI:18420"/>
    </ligand>
</feature>